<comment type="function">
    <text evidence="1">Required for respiratory activity and maintenance and expression of the mitochondrial genome.</text>
</comment>
<comment type="subcellular location">
    <subcellularLocation>
        <location evidence="1">Mitochondrion</location>
    </subcellularLocation>
</comment>
<comment type="similarity">
    <text evidence="3">Belongs to the RRG9 family.</text>
</comment>
<sequence>MILSKLSFRHVKSRISQPYVNISVLRPYSSKKSANKWILPNLTKLNETKEHTVTKQKRITKSGLDESDRELLVSLNSGPRMHADWRKMKTLPEWKRQKFALVEKLQGSKWNPKKKLSRDTIEGIRLLKEKLPELKADYFAEQFQVSPEAVRRILKSRWEPTLEERENIEERWKRRGVKHLQLKIKEQLLKTVKEKGEKSEDDRKTIESEFEDDVIVNK</sequence>
<organism>
    <name type="scientific">Komagataella phaffii (strain GS115 / ATCC 20864)</name>
    <name type="common">Yeast</name>
    <name type="synonym">Pichia pastoris</name>
    <dbReference type="NCBI Taxonomy" id="644223"/>
    <lineage>
        <taxon>Eukaryota</taxon>
        <taxon>Fungi</taxon>
        <taxon>Dikarya</taxon>
        <taxon>Ascomycota</taxon>
        <taxon>Saccharomycotina</taxon>
        <taxon>Pichiomycetes</taxon>
        <taxon>Pichiales</taxon>
        <taxon>Pichiaceae</taxon>
        <taxon>Komagataella</taxon>
    </lineage>
</organism>
<accession>C4R331</accession>
<proteinExistence type="inferred from homology"/>
<keyword id="KW-0496">Mitochondrion</keyword>
<keyword id="KW-1185">Reference proteome</keyword>
<keyword id="KW-0809">Transit peptide</keyword>
<feature type="transit peptide" description="Mitochondrion" evidence="2">
    <location>
        <begin position="1"/>
        <end position="28"/>
    </location>
</feature>
<feature type="chain" id="PRO_0000407959" description="Required for respiratory growth protein 9, mitochondrial">
    <location>
        <begin position="29"/>
        <end position="218"/>
    </location>
</feature>
<name>RRG9_KOMPG</name>
<evidence type="ECO:0000250" key="1"/>
<evidence type="ECO:0000255" key="2"/>
<evidence type="ECO:0000305" key="3"/>
<dbReference type="EMBL" id="FN392320">
    <property type="protein sequence ID" value="CAY69905.1"/>
    <property type="molecule type" value="Genomic_DNA"/>
</dbReference>
<dbReference type="RefSeq" id="XP_002492185.1">
    <property type="nucleotide sequence ID" value="XM_002492140.1"/>
</dbReference>
<dbReference type="SMR" id="C4R331"/>
<dbReference type="FunCoup" id="C4R331">
    <property type="interactions" value="33"/>
</dbReference>
<dbReference type="STRING" id="644223.C4R331"/>
<dbReference type="EnsemblFungi" id="CAY69905">
    <property type="protein sequence ID" value="CAY69905"/>
    <property type="gene ID" value="PAS_chr2-2_0031"/>
</dbReference>
<dbReference type="GeneID" id="8198988"/>
<dbReference type="KEGG" id="ppa:PAS_chr2-2_0031"/>
<dbReference type="eggNOG" id="ENOG502S7IA">
    <property type="taxonomic scope" value="Eukaryota"/>
</dbReference>
<dbReference type="HOGENOM" id="CLU_1267313_0_0_1"/>
<dbReference type="InParanoid" id="C4R331"/>
<dbReference type="OMA" id="ANKWILP"/>
<dbReference type="OrthoDB" id="5578174at2759"/>
<dbReference type="Proteomes" id="UP000000314">
    <property type="component" value="Chromosome 2"/>
</dbReference>
<dbReference type="GO" id="GO:0005739">
    <property type="term" value="C:mitochondrion"/>
    <property type="evidence" value="ECO:0007669"/>
    <property type="project" value="UniProtKB-SubCell"/>
</dbReference>
<dbReference type="GO" id="GO:0005634">
    <property type="term" value="C:nucleus"/>
    <property type="evidence" value="ECO:0007669"/>
    <property type="project" value="TreeGrafter"/>
</dbReference>
<dbReference type="InterPro" id="IPR010487">
    <property type="entry name" value="NGRN/Rrg9"/>
</dbReference>
<dbReference type="PANTHER" id="PTHR13475">
    <property type="entry name" value="NEUGRIN"/>
    <property type="match status" value="1"/>
</dbReference>
<dbReference type="PANTHER" id="PTHR13475:SF3">
    <property type="entry name" value="NEUGRIN"/>
    <property type="match status" value="1"/>
</dbReference>
<dbReference type="Pfam" id="PF06413">
    <property type="entry name" value="Neugrin"/>
    <property type="match status" value="1"/>
</dbReference>
<protein>
    <recommendedName>
        <fullName>Required for respiratory growth protein 9, mitochondrial</fullName>
    </recommendedName>
</protein>
<gene>
    <name type="primary">RRG9</name>
    <name type="ordered locus">PAS_chr2-2_0031</name>
</gene>
<reference key="1">
    <citation type="journal article" date="2009" name="Nat. Biotechnol.">
        <title>Genome sequence of the recombinant protein production host Pichia pastoris.</title>
        <authorList>
            <person name="De Schutter K."/>
            <person name="Lin Y.-C."/>
            <person name="Tiels P."/>
            <person name="Van Hecke A."/>
            <person name="Glinka S."/>
            <person name="Weber-Lehmann J."/>
            <person name="Rouze P."/>
            <person name="Van de Peer Y."/>
            <person name="Callewaert N."/>
        </authorList>
    </citation>
    <scope>NUCLEOTIDE SEQUENCE [LARGE SCALE GENOMIC DNA]</scope>
    <source>
        <strain>GS115 / ATCC 20864</strain>
    </source>
</reference>